<evidence type="ECO:0000255" key="1">
    <source>
        <dbReference type="HAMAP-Rule" id="MF_00233"/>
    </source>
</evidence>
<feature type="signal peptide" evidence="1">
    <location>
        <begin position="1"/>
        <end position="29"/>
    </location>
</feature>
<feature type="chain" id="PRO_1000100492" description="Outer-membrane lipoprotein LolB">
    <location>
        <begin position="30"/>
        <end position="210"/>
    </location>
</feature>
<feature type="lipid moiety-binding region" description="N-palmitoyl cysteine" evidence="1">
    <location>
        <position position="30"/>
    </location>
</feature>
<feature type="lipid moiety-binding region" description="S-diacylglycerol cysteine" evidence="1">
    <location>
        <position position="30"/>
    </location>
</feature>
<accession>B6J9C8</accession>
<sequence length="210" mass="24163">MSLISNNEERSLRVRYCIAIALSALLISGCTTLRLPNQSTSVYHQQTWAQRYYDLSRISQWNIDGAFSIQQPGKTIIAAYDWQQKGMNYRIRIHSSLDIYSVNISGRPGMVTLWRSPRQHYTASTPEQLMQQQLGWQLPLSNLYYWIRGIPAPGAYQADFDTYTHLIALQQSGWHIRFSQYTTVGSVDLPRTLQLSNGPLAVKIVLKHWQ</sequence>
<protein>
    <recommendedName>
        <fullName evidence="1">Outer-membrane lipoprotein LolB</fullName>
    </recommendedName>
</protein>
<name>LOLB_COXB1</name>
<organism>
    <name type="scientific">Coxiella burnetii (strain CbuK_Q154)</name>
    <name type="common">Coxiella burnetii (strain Q154)</name>
    <dbReference type="NCBI Taxonomy" id="434924"/>
    <lineage>
        <taxon>Bacteria</taxon>
        <taxon>Pseudomonadati</taxon>
        <taxon>Pseudomonadota</taxon>
        <taxon>Gammaproteobacteria</taxon>
        <taxon>Legionellales</taxon>
        <taxon>Coxiellaceae</taxon>
        <taxon>Coxiella</taxon>
    </lineage>
</organism>
<reference key="1">
    <citation type="journal article" date="2009" name="Infect. Immun.">
        <title>Comparative genomics reveal extensive transposon-mediated genomic plasticity and diversity among potential effector proteins within the genus Coxiella.</title>
        <authorList>
            <person name="Beare P.A."/>
            <person name="Unsworth N."/>
            <person name="Andoh M."/>
            <person name="Voth D.E."/>
            <person name="Omsland A."/>
            <person name="Gilk S.D."/>
            <person name="Williams K.P."/>
            <person name="Sobral B.W."/>
            <person name="Kupko J.J. III"/>
            <person name="Porcella S.F."/>
            <person name="Samuel J.E."/>
            <person name="Heinzen R.A."/>
        </authorList>
    </citation>
    <scope>NUCLEOTIDE SEQUENCE [LARGE SCALE GENOMIC DNA]</scope>
    <source>
        <strain>CbuK_Q154</strain>
    </source>
</reference>
<keyword id="KW-0998">Cell outer membrane</keyword>
<keyword id="KW-0143">Chaperone</keyword>
<keyword id="KW-0449">Lipoprotein</keyword>
<keyword id="KW-0472">Membrane</keyword>
<keyword id="KW-0564">Palmitate</keyword>
<keyword id="KW-0653">Protein transport</keyword>
<keyword id="KW-0732">Signal</keyword>
<keyword id="KW-0813">Transport</keyword>
<comment type="function">
    <text evidence="1">Plays a critical role in the incorporation of lipoproteins in the outer membrane after they are released by the LolA protein.</text>
</comment>
<comment type="subunit">
    <text evidence="1">Monomer.</text>
</comment>
<comment type="subcellular location">
    <subcellularLocation>
        <location evidence="1">Cell outer membrane</location>
        <topology evidence="1">Lipid-anchor</topology>
    </subcellularLocation>
</comment>
<comment type="similarity">
    <text evidence="1">Belongs to the LolB family.</text>
</comment>
<dbReference type="EMBL" id="CP001020">
    <property type="protein sequence ID" value="ACJ19445.1"/>
    <property type="molecule type" value="Genomic_DNA"/>
</dbReference>
<dbReference type="RefSeq" id="WP_005770176.1">
    <property type="nucleotide sequence ID" value="NC_011528.1"/>
</dbReference>
<dbReference type="SMR" id="B6J9C8"/>
<dbReference type="KEGG" id="cbc:CbuK_0125"/>
<dbReference type="HOGENOM" id="CLU_092816_2_1_6"/>
<dbReference type="GO" id="GO:0009279">
    <property type="term" value="C:cell outer membrane"/>
    <property type="evidence" value="ECO:0007669"/>
    <property type="project" value="UniProtKB-SubCell"/>
</dbReference>
<dbReference type="GO" id="GO:0044874">
    <property type="term" value="P:lipoprotein localization to outer membrane"/>
    <property type="evidence" value="ECO:0007669"/>
    <property type="project" value="UniProtKB-UniRule"/>
</dbReference>
<dbReference type="GO" id="GO:0015031">
    <property type="term" value="P:protein transport"/>
    <property type="evidence" value="ECO:0007669"/>
    <property type="project" value="UniProtKB-KW"/>
</dbReference>
<dbReference type="CDD" id="cd16326">
    <property type="entry name" value="LolB"/>
    <property type="match status" value="1"/>
</dbReference>
<dbReference type="Gene3D" id="2.50.20.10">
    <property type="entry name" value="Lipoprotein localisation LolA/LolB/LppX"/>
    <property type="match status" value="1"/>
</dbReference>
<dbReference type="HAMAP" id="MF_00233">
    <property type="entry name" value="LolB"/>
    <property type="match status" value="1"/>
</dbReference>
<dbReference type="InterPro" id="IPR029046">
    <property type="entry name" value="LolA/LolB/LppX"/>
</dbReference>
<dbReference type="InterPro" id="IPR004565">
    <property type="entry name" value="OM_lipoprot_LolB"/>
</dbReference>
<dbReference type="NCBIfam" id="TIGR00548">
    <property type="entry name" value="lolB"/>
    <property type="match status" value="1"/>
</dbReference>
<dbReference type="Pfam" id="PF03550">
    <property type="entry name" value="LolB"/>
    <property type="match status" value="1"/>
</dbReference>
<dbReference type="SUPFAM" id="SSF89392">
    <property type="entry name" value="Prokaryotic lipoproteins and lipoprotein localization factors"/>
    <property type="match status" value="1"/>
</dbReference>
<gene>
    <name evidence="1" type="primary">lolB</name>
    <name type="ordered locus">CbuK_0125</name>
</gene>
<proteinExistence type="inferred from homology"/>